<feature type="chain" id="PRO_0000160718" description="Alcohol dehydrogenase 2">
    <location>
        <begin position="1"/>
        <end position="348"/>
    </location>
</feature>
<feature type="binding site" evidence="1">
    <location>
        <position position="44"/>
    </location>
    <ligand>
        <name>Zn(2+)</name>
        <dbReference type="ChEBI" id="CHEBI:29105"/>
        <label>1</label>
        <note>catalytic</note>
    </ligand>
</feature>
<feature type="binding site" evidence="1">
    <location>
        <position position="67"/>
    </location>
    <ligand>
        <name>Zn(2+)</name>
        <dbReference type="ChEBI" id="CHEBI:29105"/>
        <label>1</label>
        <note>catalytic</note>
    </ligand>
</feature>
<feature type="binding site" evidence="1">
    <location>
        <position position="98"/>
    </location>
    <ligand>
        <name>Zn(2+)</name>
        <dbReference type="ChEBI" id="CHEBI:29105"/>
        <label>2</label>
    </ligand>
</feature>
<feature type="binding site" evidence="1">
    <location>
        <position position="101"/>
    </location>
    <ligand>
        <name>Zn(2+)</name>
        <dbReference type="ChEBI" id="CHEBI:29105"/>
        <label>2</label>
    </ligand>
</feature>
<feature type="binding site" evidence="1">
    <location>
        <position position="104"/>
    </location>
    <ligand>
        <name>Zn(2+)</name>
        <dbReference type="ChEBI" id="CHEBI:29105"/>
        <label>2</label>
    </ligand>
</feature>
<feature type="binding site" evidence="1">
    <location>
        <position position="112"/>
    </location>
    <ligand>
        <name>Zn(2+)</name>
        <dbReference type="ChEBI" id="CHEBI:29105"/>
        <label>2</label>
    </ligand>
</feature>
<feature type="binding site" evidence="1">
    <location>
        <position position="154"/>
    </location>
    <ligand>
        <name>Zn(2+)</name>
        <dbReference type="ChEBI" id="CHEBI:29105"/>
        <label>1</label>
        <note>catalytic</note>
    </ligand>
</feature>
<feature type="binding site" evidence="1">
    <location>
        <begin position="178"/>
        <end position="184"/>
    </location>
    <ligand>
        <name>NAD(+)</name>
        <dbReference type="ChEBI" id="CHEBI:57540"/>
    </ligand>
</feature>
<feature type="binding site" evidence="1">
    <location>
        <position position="202"/>
    </location>
    <ligand>
        <name>NAD(+)</name>
        <dbReference type="ChEBI" id="CHEBI:57540"/>
    </ligand>
</feature>
<feature type="binding site" evidence="1">
    <location>
        <position position="207"/>
    </location>
    <ligand>
        <name>NAD(+)</name>
        <dbReference type="ChEBI" id="CHEBI:57540"/>
    </ligand>
</feature>
<feature type="binding site" evidence="1">
    <location>
        <begin position="269"/>
        <end position="271"/>
    </location>
    <ligand>
        <name>NAD(+)</name>
        <dbReference type="ChEBI" id="CHEBI:57540"/>
    </ligand>
</feature>
<feature type="binding site" evidence="1">
    <location>
        <position position="341"/>
    </location>
    <ligand>
        <name>NAD(+)</name>
        <dbReference type="ChEBI" id="CHEBI:57540"/>
    </ligand>
</feature>
<proteinExistence type="inferred from homology"/>
<sequence>MSVPTTQKAVIFETNGGKLEYKDIPVPKPKANELLINVKYSGVCHTDLHAWKGDWPLATKLPLVGGHEGAGVVVALGENVKGWKVGDYAGVKWLNGSCLNCEYCQSGAEPNCAEADLSGYTHDGSFQQYATADAVQAARIPAGTDLANVAPILCAGVTVYKALKTAELEAGQWVAISGAAGGLGSLAVQYAKAMGYRVLAIDGGEDKGEFVKSLGAETFIDFTKEKDVVEAVKKATNGGPHGVINVSVSERAIGQSTEYVRTLGKVVLVGLPAGAKISTPVFDAVIKTIQIKGSYVGNRKDTAEAVDFFTRGLIKCPIKIVGLSELPEVYKLMEEGKILGRYVLDNDK</sequence>
<reference key="1">
    <citation type="submission" date="1998-11" db="EMBL/GenBank/DDBJ databases">
        <title>Candida albicans strain 1161 genome pilot sequencing project.</title>
        <authorList>
            <person name="Taylor K."/>
            <person name="Harris D."/>
            <person name="Barrell B.G."/>
            <person name="Rajandream M.A."/>
        </authorList>
    </citation>
    <scope>NUCLEOTIDE SEQUENCE [LARGE SCALE GENOMIC DNA]</scope>
    <source>
        <strain>1161</strain>
    </source>
</reference>
<reference key="2">
    <citation type="journal article" date="2004" name="Proc. Natl. Acad. Sci. U.S.A.">
        <title>The diploid genome sequence of Candida albicans.</title>
        <authorList>
            <person name="Jones T."/>
            <person name="Federspiel N.A."/>
            <person name="Chibana H."/>
            <person name="Dungan J."/>
            <person name="Kalman S."/>
            <person name="Magee B.B."/>
            <person name="Newport G."/>
            <person name="Thorstenson Y.R."/>
            <person name="Agabian N."/>
            <person name="Magee P.T."/>
            <person name="Davis R.W."/>
            <person name="Scherer S."/>
        </authorList>
    </citation>
    <scope>NUCLEOTIDE SEQUENCE [LARGE SCALE GENOMIC DNA]</scope>
    <source>
        <strain>SC5314 / ATCC MYA-2876</strain>
    </source>
</reference>
<reference key="3">
    <citation type="journal article" date="2007" name="Genome Biol.">
        <title>Assembly of the Candida albicans genome into sixteen supercontigs aligned on the eight chromosomes.</title>
        <authorList>
            <person name="van het Hoog M."/>
            <person name="Rast T.J."/>
            <person name="Martchenko M."/>
            <person name="Grindle S."/>
            <person name="Dignard D."/>
            <person name="Hogues H."/>
            <person name="Cuomo C."/>
            <person name="Berriman M."/>
            <person name="Scherer S."/>
            <person name="Magee B.B."/>
            <person name="Whiteway M."/>
            <person name="Chibana H."/>
            <person name="Nantel A."/>
            <person name="Magee P.T."/>
        </authorList>
    </citation>
    <scope>GENOME REANNOTATION</scope>
    <source>
        <strain>SC5314 / ATCC MYA-2876</strain>
    </source>
</reference>
<reference key="4">
    <citation type="journal article" date="2013" name="Genome Biol.">
        <title>Assembly of a phased diploid Candida albicans genome facilitates allele-specific measurements and provides a simple model for repeat and indel structure.</title>
        <authorList>
            <person name="Muzzey D."/>
            <person name="Schwartz K."/>
            <person name="Weissman J.S."/>
            <person name="Sherlock G."/>
        </authorList>
    </citation>
    <scope>NUCLEOTIDE SEQUENCE [LARGE SCALE GENOMIC DNA]</scope>
    <scope>GENOME REANNOTATION</scope>
    <source>
        <strain>SC5314 / ATCC MYA-2876</strain>
    </source>
</reference>
<keyword id="KW-0963">Cytoplasm</keyword>
<keyword id="KW-0479">Metal-binding</keyword>
<keyword id="KW-0520">NAD</keyword>
<keyword id="KW-0560">Oxidoreductase</keyword>
<keyword id="KW-1185">Reference proteome</keyword>
<keyword id="KW-0862">Zinc</keyword>
<protein>
    <recommendedName>
        <fullName>Alcohol dehydrogenase 2</fullName>
        <ecNumber>1.1.1.1</ecNumber>
    </recommendedName>
</protein>
<name>ADH2_CANAL</name>
<comment type="catalytic activity">
    <reaction>
        <text>a primary alcohol + NAD(+) = an aldehyde + NADH + H(+)</text>
        <dbReference type="Rhea" id="RHEA:10736"/>
        <dbReference type="ChEBI" id="CHEBI:15378"/>
        <dbReference type="ChEBI" id="CHEBI:15734"/>
        <dbReference type="ChEBI" id="CHEBI:17478"/>
        <dbReference type="ChEBI" id="CHEBI:57540"/>
        <dbReference type="ChEBI" id="CHEBI:57945"/>
        <dbReference type="EC" id="1.1.1.1"/>
    </reaction>
</comment>
<comment type="catalytic activity">
    <reaction>
        <text>a secondary alcohol + NAD(+) = a ketone + NADH + H(+)</text>
        <dbReference type="Rhea" id="RHEA:10740"/>
        <dbReference type="ChEBI" id="CHEBI:15378"/>
        <dbReference type="ChEBI" id="CHEBI:17087"/>
        <dbReference type="ChEBI" id="CHEBI:35681"/>
        <dbReference type="ChEBI" id="CHEBI:57540"/>
        <dbReference type="ChEBI" id="CHEBI:57945"/>
        <dbReference type="EC" id="1.1.1.1"/>
    </reaction>
</comment>
<comment type="cofactor">
    <cofactor evidence="1">
        <name>Zn(2+)</name>
        <dbReference type="ChEBI" id="CHEBI:29105"/>
    </cofactor>
    <text evidence="1">Binds 2 Zn(2+) ions per subunit.</text>
</comment>
<comment type="subunit">
    <text evidence="1">Homotetramer.</text>
</comment>
<comment type="subcellular location">
    <subcellularLocation>
        <location evidence="2">Cytoplasm</location>
    </subcellularLocation>
</comment>
<comment type="similarity">
    <text evidence="2">Belongs to the zinc-containing alcohol dehydrogenase family.</text>
</comment>
<evidence type="ECO:0000250" key="1"/>
<evidence type="ECO:0000305" key="2"/>
<organism>
    <name type="scientific">Candida albicans (strain SC5314 / ATCC MYA-2876)</name>
    <name type="common">Yeast</name>
    <dbReference type="NCBI Taxonomy" id="237561"/>
    <lineage>
        <taxon>Eukaryota</taxon>
        <taxon>Fungi</taxon>
        <taxon>Dikarya</taxon>
        <taxon>Ascomycota</taxon>
        <taxon>Saccharomycotina</taxon>
        <taxon>Pichiomycetes</taxon>
        <taxon>Debaryomycetaceae</taxon>
        <taxon>Candida/Lodderomyces clade</taxon>
        <taxon>Candida</taxon>
    </lineage>
</organism>
<accession>O94038</accession>
<accession>A0A1D8PED4</accession>
<accession>Q5A749</accession>
<gene>
    <name type="primary">ADH2</name>
    <name type="ordered locus">CAALFM_C108330CA</name>
    <name type="ORF">Ca41C10.04</name>
    <name type="ORF">CaO19.12579</name>
    <name type="ORF">CaO19.5113</name>
</gene>
<dbReference type="EC" id="1.1.1.1"/>
<dbReference type="EMBL" id="AL033501">
    <property type="protein sequence ID" value="CAA21988.1"/>
    <property type="molecule type" value="Genomic_DNA"/>
</dbReference>
<dbReference type="EMBL" id="CP017623">
    <property type="protein sequence ID" value="AOW26471.1"/>
    <property type="molecule type" value="Genomic_DNA"/>
</dbReference>
<dbReference type="PIR" id="T18230">
    <property type="entry name" value="T18230"/>
</dbReference>
<dbReference type="RefSeq" id="XP_717649.1">
    <property type="nucleotide sequence ID" value="XM_712556.2"/>
</dbReference>
<dbReference type="SMR" id="O94038"/>
<dbReference type="BioGRID" id="1223845">
    <property type="interactions" value="2"/>
</dbReference>
<dbReference type="FunCoup" id="O94038">
    <property type="interactions" value="1039"/>
</dbReference>
<dbReference type="STRING" id="237561.O94038"/>
<dbReference type="EnsemblFungi" id="C1_08330C_A-T">
    <property type="protein sequence ID" value="C1_08330C_A-T-p1"/>
    <property type="gene ID" value="C1_08330C_A"/>
</dbReference>
<dbReference type="GeneID" id="3640751"/>
<dbReference type="KEGG" id="cal:CAALFM_C108330CA"/>
<dbReference type="CGD" id="CAL0000200753">
    <property type="gene designation" value="ADH2"/>
</dbReference>
<dbReference type="VEuPathDB" id="FungiDB:C1_08330C_A"/>
<dbReference type="eggNOG" id="KOG0023">
    <property type="taxonomic scope" value="Eukaryota"/>
</dbReference>
<dbReference type="HOGENOM" id="CLU_026673_20_1_1"/>
<dbReference type="InParanoid" id="O94038"/>
<dbReference type="OMA" id="AFPHVKP"/>
<dbReference type="OrthoDB" id="1879366at2759"/>
<dbReference type="PRO" id="PR:O94038"/>
<dbReference type="Proteomes" id="UP000000559">
    <property type="component" value="Chromosome 1"/>
</dbReference>
<dbReference type="GO" id="GO:0005737">
    <property type="term" value="C:cytoplasm"/>
    <property type="evidence" value="ECO:0000318"/>
    <property type="project" value="GO_Central"/>
</dbReference>
<dbReference type="GO" id="GO:0062040">
    <property type="term" value="C:fungal biofilm matrix"/>
    <property type="evidence" value="ECO:0000314"/>
    <property type="project" value="CGD"/>
</dbReference>
<dbReference type="GO" id="GO:0004022">
    <property type="term" value="F:alcohol dehydrogenase (NAD+) activity"/>
    <property type="evidence" value="ECO:0000318"/>
    <property type="project" value="GO_Central"/>
</dbReference>
<dbReference type="GO" id="GO:0008270">
    <property type="term" value="F:zinc ion binding"/>
    <property type="evidence" value="ECO:0007669"/>
    <property type="project" value="InterPro"/>
</dbReference>
<dbReference type="CDD" id="cd08297">
    <property type="entry name" value="CAD3"/>
    <property type="match status" value="1"/>
</dbReference>
<dbReference type="FunFam" id="3.40.50.720:FF:000039">
    <property type="entry name" value="Alcohol dehydrogenase AdhP"/>
    <property type="match status" value="1"/>
</dbReference>
<dbReference type="FunFam" id="3.90.180.10:FF:000002">
    <property type="entry name" value="Alcohol dehydrogenase AdhP"/>
    <property type="match status" value="1"/>
</dbReference>
<dbReference type="Gene3D" id="3.90.180.10">
    <property type="entry name" value="Medium-chain alcohol dehydrogenases, catalytic domain"/>
    <property type="match status" value="1"/>
</dbReference>
<dbReference type="Gene3D" id="3.40.50.720">
    <property type="entry name" value="NAD(P)-binding Rossmann-like Domain"/>
    <property type="match status" value="1"/>
</dbReference>
<dbReference type="InterPro" id="IPR013149">
    <property type="entry name" value="ADH-like_C"/>
</dbReference>
<dbReference type="InterPro" id="IPR013154">
    <property type="entry name" value="ADH-like_N"/>
</dbReference>
<dbReference type="InterPro" id="IPR002328">
    <property type="entry name" value="ADH_Zn_CS"/>
</dbReference>
<dbReference type="InterPro" id="IPR011032">
    <property type="entry name" value="GroES-like_sf"/>
</dbReference>
<dbReference type="InterPro" id="IPR036291">
    <property type="entry name" value="NAD(P)-bd_dom_sf"/>
</dbReference>
<dbReference type="InterPro" id="IPR020843">
    <property type="entry name" value="PKS_ER"/>
</dbReference>
<dbReference type="PANTHER" id="PTHR42940">
    <property type="entry name" value="ALCOHOL DEHYDROGENASE 1-RELATED"/>
    <property type="match status" value="1"/>
</dbReference>
<dbReference type="PANTHER" id="PTHR42940:SF3">
    <property type="entry name" value="ALCOHOL DEHYDROGENASE 1-RELATED"/>
    <property type="match status" value="1"/>
</dbReference>
<dbReference type="Pfam" id="PF08240">
    <property type="entry name" value="ADH_N"/>
    <property type="match status" value="1"/>
</dbReference>
<dbReference type="Pfam" id="PF00107">
    <property type="entry name" value="ADH_zinc_N"/>
    <property type="match status" value="1"/>
</dbReference>
<dbReference type="SMART" id="SM00829">
    <property type="entry name" value="PKS_ER"/>
    <property type="match status" value="1"/>
</dbReference>
<dbReference type="SUPFAM" id="SSF50129">
    <property type="entry name" value="GroES-like"/>
    <property type="match status" value="1"/>
</dbReference>
<dbReference type="SUPFAM" id="SSF51735">
    <property type="entry name" value="NAD(P)-binding Rossmann-fold domains"/>
    <property type="match status" value="1"/>
</dbReference>
<dbReference type="PROSITE" id="PS00059">
    <property type="entry name" value="ADH_ZINC"/>
    <property type="match status" value="1"/>
</dbReference>